<dbReference type="EMBL" id="BX901962">
    <property type="protein sequence ID" value="CAI20682.1"/>
    <property type="molecule type" value="Genomic_DNA"/>
</dbReference>
<dbReference type="EMBL" id="CT573114">
    <property type="protein sequence ID" value="CAN88072.1"/>
    <property type="molecule type" value="Genomic_DNA"/>
</dbReference>
<dbReference type="EMBL" id="BC074038">
    <property type="protein sequence ID" value="AAH74038.1"/>
    <property type="molecule type" value="mRNA"/>
</dbReference>
<dbReference type="EMBL" id="BC142792">
    <property type="protein sequence ID" value="AAI42793.1"/>
    <property type="molecule type" value="mRNA"/>
</dbReference>
<dbReference type="RefSeq" id="NP_001002186.1">
    <property type="nucleotide sequence ID" value="NM_001002186.1"/>
</dbReference>
<dbReference type="SMR" id="Q6GMK6"/>
<dbReference type="FunCoup" id="Q6GMK6">
    <property type="interactions" value="68"/>
</dbReference>
<dbReference type="STRING" id="7955.ENSDARP00000067189"/>
<dbReference type="GlyCosmos" id="Q6GMK6">
    <property type="glycosylation" value="1 site, No reported glycans"/>
</dbReference>
<dbReference type="PaxDb" id="7955-ENSDARP00000067189"/>
<dbReference type="Ensembl" id="ENSDART00000067190">
    <property type="protein sequence ID" value="ENSDARP00000067189"/>
    <property type="gene ID" value="ENSDARG00000045706"/>
</dbReference>
<dbReference type="Ensembl" id="ENSDART00000187906">
    <property type="protein sequence ID" value="ENSDARP00000147254"/>
    <property type="gene ID" value="ENSDARG00000111048"/>
</dbReference>
<dbReference type="Ensembl" id="ENSDART00000192267">
    <property type="protein sequence ID" value="ENSDARP00000155306"/>
    <property type="gene ID" value="ENSDARG00000110620"/>
</dbReference>
<dbReference type="GeneID" id="431733"/>
<dbReference type="KEGG" id="dre:431733"/>
<dbReference type="AGR" id="ZFIN:ZDB-GENE-040704-25"/>
<dbReference type="CTD" id="431733"/>
<dbReference type="ZFIN" id="ZDB-GENE-040704-25">
    <property type="gene designation" value="tspan9b"/>
</dbReference>
<dbReference type="eggNOG" id="KOG3882">
    <property type="taxonomic scope" value="Eukaryota"/>
</dbReference>
<dbReference type="HOGENOM" id="CLU_055524_4_3_1"/>
<dbReference type="InParanoid" id="Q6GMK6"/>
<dbReference type="OMA" id="WNAIQGE"/>
<dbReference type="OrthoDB" id="432835at2759"/>
<dbReference type="PhylomeDB" id="Q6GMK6"/>
<dbReference type="TreeFam" id="TF352892"/>
<dbReference type="Reactome" id="R-DRE-6798695">
    <property type="pathway name" value="Neutrophil degranulation"/>
</dbReference>
<dbReference type="PRO" id="PR:Q6GMK6"/>
<dbReference type="Proteomes" id="UP000000437">
    <property type="component" value="Alternate scaffold 4"/>
</dbReference>
<dbReference type="Proteomes" id="UP000000437">
    <property type="component" value="Chromosome 4"/>
</dbReference>
<dbReference type="Bgee" id="ENSDARG00000045706">
    <property type="expression patterns" value="Expressed in swim bladder and 25 other cell types or tissues"/>
</dbReference>
<dbReference type="GO" id="GO:0005886">
    <property type="term" value="C:plasma membrane"/>
    <property type="evidence" value="ECO:0000318"/>
    <property type="project" value="GO_Central"/>
</dbReference>
<dbReference type="CDD" id="cd03165">
    <property type="entry name" value="NET-5_like_LEL"/>
    <property type="match status" value="1"/>
</dbReference>
<dbReference type="FunFam" id="1.10.1450.10:FF:000008">
    <property type="entry name" value="Tetraspanin"/>
    <property type="match status" value="1"/>
</dbReference>
<dbReference type="Gene3D" id="1.10.1450.10">
    <property type="entry name" value="Tetraspanin"/>
    <property type="match status" value="1"/>
</dbReference>
<dbReference type="InterPro" id="IPR018499">
    <property type="entry name" value="Tetraspanin/Peripherin"/>
</dbReference>
<dbReference type="InterPro" id="IPR000301">
    <property type="entry name" value="Tetraspanin_animals"/>
</dbReference>
<dbReference type="InterPro" id="IPR018503">
    <property type="entry name" value="Tetraspanin_CS"/>
</dbReference>
<dbReference type="InterPro" id="IPR008952">
    <property type="entry name" value="Tetraspanin_EC2_sf"/>
</dbReference>
<dbReference type="PANTHER" id="PTHR19282">
    <property type="entry name" value="TETRASPANIN"/>
    <property type="match status" value="1"/>
</dbReference>
<dbReference type="PANTHER" id="PTHR19282:SF364">
    <property type="entry name" value="TETRASPANIN-9"/>
    <property type="match status" value="1"/>
</dbReference>
<dbReference type="Pfam" id="PF00335">
    <property type="entry name" value="Tetraspanin"/>
    <property type="match status" value="1"/>
</dbReference>
<dbReference type="PIRSF" id="PIRSF002419">
    <property type="entry name" value="Tetraspanin"/>
    <property type="match status" value="1"/>
</dbReference>
<dbReference type="PRINTS" id="PR00259">
    <property type="entry name" value="TMFOUR"/>
</dbReference>
<dbReference type="SUPFAM" id="SSF48652">
    <property type="entry name" value="Tetraspanin"/>
    <property type="match status" value="1"/>
</dbReference>
<dbReference type="PROSITE" id="PS00421">
    <property type="entry name" value="TM4_1"/>
    <property type="match status" value="1"/>
</dbReference>
<protein>
    <recommendedName>
        <fullName>Tetraspanin-9</fullName>
        <shortName>Tspan-9</shortName>
    </recommendedName>
</protein>
<gene>
    <name type="primary">tspan9</name>
    <name type="ORF">si:ch73-161g10.1</name>
    <name type="ORF">si:dkey-153k10.10</name>
    <name type="ORF">wu:fj18d05</name>
    <name type="ORF">zgc:91880</name>
</gene>
<evidence type="ECO:0000250" key="1"/>
<evidence type="ECO:0000255" key="2"/>
<evidence type="ECO:0000305" key="3"/>
<proteinExistence type="evidence at transcript level"/>
<reference key="1">
    <citation type="submission" date="2007-06" db="EMBL/GenBank/DDBJ databases">
        <authorList>
            <consortium name="NIH - Zebrafish Gene Collection (ZGC) project"/>
        </authorList>
    </citation>
    <scope>NUCLEOTIDE SEQUENCE [LARGE SCALE MRNA]</scope>
    <source>
        <tissue>Olfactory epithelium</tissue>
    </source>
</reference>
<reference key="2">
    <citation type="journal article" date="2013" name="Nature">
        <title>The zebrafish reference genome sequence and its relationship to the human genome.</title>
        <authorList>
            <person name="Howe K."/>
            <person name="Clark M.D."/>
            <person name="Torroja C.F."/>
            <person name="Torrance J."/>
            <person name="Berthelot C."/>
            <person name="Muffato M."/>
            <person name="Collins J.E."/>
            <person name="Humphray S."/>
            <person name="McLaren K."/>
            <person name="Matthews L."/>
            <person name="McLaren S."/>
            <person name="Sealy I."/>
            <person name="Caccamo M."/>
            <person name="Churcher C."/>
            <person name="Scott C."/>
            <person name="Barrett J.C."/>
            <person name="Koch R."/>
            <person name="Rauch G.J."/>
            <person name="White S."/>
            <person name="Chow W."/>
            <person name="Kilian B."/>
            <person name="Quintais L.T."/>
            <person name="Guerra-Assuncao J.A."/>
            <person name="Zhou Y."/>
            <person name="Gu Y."/>
            <person name="Yen J."/>
            <person name="Vogel J.H."/>
            <person name="Eyre T."/>
            <person name="Redmond S."/>
            <person name="Banerjee R."/>
            <person name="Chi J."/>
            <person name="Fu B."/>
            <person name="Langley E."/>
            <person name="Maguire S.F."/>
            <person name="Laird G.K."/>
            <person name="Lloyd D."/>
            <person name="Kenyon E."/>
            <person name="Donaldson S."/>
            <person name="Sehra H."/>
            <person name="Almeida-King J."/>
            <person name="Loveland J."/>
            <person name="Trevanion S."/>
            <person name="Jones M."/>
            <person name="Quail M."/>
            <person name="Willey D."/>
            <person name="Hunt A."/>
            <person name="Burton J."/>
            <person name="Sims S."/>
            <person name="McLay K."/>
            <person name="Plumb B."/>
            <person name="Davis J."/>
            <person name="Clee C."/>
            <person name="Oliver K."/>
            <person name="Clark R."/>
            <person name="Riddle C."/>
            <person name="Elliot D."/>
            <person name="Threadgold G."/>
            <person name="Harden G."/>
            <person name="Ware D."/>
            <person name="Begum S."/>
            <person name="Mortimore B."/>
            <person name="Kerry G."/>
            <person name="Heath P."/>
            <person name="Phillimore B."/>
            <person name="Tracey A."/>
            <person name="Corby N."/>
            <person name="Dunn M."/>
            <person name="Johnson C."/>
            <person name="Wood J."/>
            <person name="Clark S."/>
            <person name="Pelan S."/>
            <person name="Griffiths G."/>
            <person name="Smith M."/>
            <person name="Glithero R."/>
            <person name="Howden P."/>
            <person name="Barker N."/>
            <person name="Lloyd C."/>
            <person name="Stevens C."/>
            <person name="Harley J."/>
            <person name="Holt K."/>
            <person name="Panagiotidis G."/>
            <person name="Lovell J."/>
            <person name="Beasley H."/>
            <person name="Henderson C."/>
            <person name="Gordon D."/>
            <person name="Auger K."/>
            <person name="Wright D."/>
            <person name="Collins J."/>
            <person name="Raisen C."/>
            <person name="Dyer L."/>
            <person name="Leung K."/>
            <person name="Robertson L."/>
            <person name="Ambridge K."/>
            <person name="Leongamornlert D."/>
            <person name="McGuire S."/>
            <person name="Gilderthorp R."/>
            <person name="Griffiths C."/>
            <person name="Manthravadi D."/>
            <person name="Nichol S."/>
            <person name="Barker G."/>
            <person name="Whitehead S."/>
            <person name="Kay M."/>
            <person name="Brown J."/>
            <person name="Murnane C."/>
            <person name="Gray E."/>
            <person name="Humphries M."/>
            <person name="Sycamore N."/>
            <person name="Barker D."/>
            <person name="Saunders D."/>
            <person name="Wallis J."/>
            <person name="Babbage A."/>
            <person name="Hammond S."/>
            <person name="Mashreghi-Mohammadi M."/>
            <person name="Barr L."/>
            <person name="Martin S."/>
            <person name="Wray P."/>
            <person name="Ellington A."/>
            <person name="Matthews N."/>
            <person name="Ellwood M."/>
            <person name="Woodmansey R."/>
            <person name="Clark G."/>
            <person name="Cooper J."/>
            <person name="Tromans A."/>
            <person name="Grafham D."/>
            <person name="Skuce C."/>
            <person name="Pandian R."/>
            <person name="Andrews R."/>
            <person name="Harrison E."/>
            <person name="Kimberley A."/>
            <person name="Garnett J."/>
            <person name="Fosker N."/>
            <person name="Hall R."/>
            <person name="Garner P."/>
            <person name="Kelly D."/>
            <person name="Bird C."/>
            <person name="Palmer S."/>
            <person name="Gehring I."/>
            <person name="Berger A."/>
            <person name="Dooley C.M."/>
            <person name="Ersan-Urun Z."/>
            <person name="Eser C."/>
            <person name="Geiger H."/>
            <person name="Geisler M."/>
            <person name="Karotki L."/>
            <person name="Kirn A."/>
            <person name="Konantz J."/>
            <person name="Konantz M."/>
            <person name="Oberlander M."/>
            <person name="Rudolph-Geiger S."/>
            <person name="Teucke M."/>
            <person name="Lanz C."/>
            <person name="Raddatz G."/>
            <person name="Osoegawa K."/>
            <person name="Zhu B."/>
            <person name="Rapp A."/>
            <person name="Widaa S."/>
            <person name="Langford C."/>
            <person name="Yang F."/>
            <person name="Schuster S.C."/>
            <person name="Carter N.P."/>
            <person name="Harrow J."/>
            <person name="Ning Z."/>
            <person name="Herrero J."/>
            <person name="Searle S.M."/>
            <person name="Enright A."/>
            <person name="Geisler R."/>
            <person name="Plasterk R.H."/>
            <person name="Lee C."/>
            <person name="Westerfield M."/>
            <person name="de Jong P.J."/>
            <person name="Zon L.I."/>
            <person name="Postlethwait J.H."/>
            <person name="Nusslein-Volhard C."/>
            <person name="Hubbard T.J."/>
            <person name="Roest Crollius H."/>
            <person name="Rogers J."/>
            <person name="Stemple D.L."/>
        </authorList>
    </citation>
    <scope>NUCLEOTIDE SEQUENCE [LARGE SCALE GENOMIC DNA]</scope>
    <source>
        <strain>Tuebingen</strain>
    </source>
</reference>
<comment type="subcellular location">
    <subcellularLocation>
        <location evidence="1">Membrane</location>
        <topology evidence="1">Multi-pass membrane protein</topology>
    </subcellularLocation>
</comment>
<comment type="similarity">
    <text evidence="3">Belongs to the tetraspanin (TM4SF) family.</text>
</comment>
<sequence>MARGCLCCVKYMMFLFNLLFWLSGCGLLGVGIWLSVSQGSFATFSPSFPSLSAANLVITLGSVVMVTGFLGCLGAIKENKCLLLSFFIVLLIILLAELILLILFFVYTEKVSENAKQDLKDGLRLYNTDNNVGLRNAWNIIQAEWQCCGVTGLSDWHEALQEKSVPDRCCQEHYTECGRNTTNVFWSQGCYEKVEEWLNDNKHLLGTIAMCVLVLQLLGMAFSMTLYQQIHRAGKKYDA</sequence>
<organism>
    <name type="scientific">Danio rerio</name>
    <name type="common">Zebrafish</name>
    <name type="synonym">Brachydanio rerio</name>
    <dbReference type="NCBI Taxonomy" id="7955"/>
    <lineage>
        <taxon>Eukaryota</taxon>
        <taxon>Metazoa</taxon>
        <taxon>Chordata</taxon>
        <taxon>Craniata</taxon>
        <taxon>Vertebrata</taxon>
        <taxon>Euteleostomi</taxon>
        <taxon>Actinopterygii</taxon>
        <taxon>Neopterygii</taxon>
        <taxon>Teleostei</taxon>
        <taxon>Ostariophysi</taxon>
        <taxon>Cypriniformes</taxon>
        <taxon>Danionidae</taxon>
        <taxon>Danioninae</taxon>
        <taxon>Danio</taxon>
    </lineage>
</organism>
<feature type="chain" id="PRO_0000375883" description="Tetraspanin-9">
    <location>
        <begin position="1"/>
        <end position="239"/>
    </location>
</feature>
<feature type="topological domain" description="Cytoplasmic" evidence="2">
    <location>
        <begin position="1"/>
        <end position="13"/>
    </location>
</feature>
<feature type="transmembrane region" description="Helical" evidence="2">
    <location>
        <begin position="14"/>
        <end position="34"/>
    </location>
</feature>
<feature type="topological domain" description="Extracellular" evidence="2">
    <location>
        <begin position="35"/>
        <end position="55"/>
    </location>
</feature>
<feature type="transmembrane region" description="Helical" evidence="2">
    <location>
        <begin position="56"/>
        <end position="76"/>
    </location>
</feature>
<feature type="topological domain" description="Cytoplasmic" evidence="2">
    <location>
        <begin position="77"/>
        <end position="85"/>
    </location>
</feature>
<feature type="transmembrane region" description="Helical" evidence="2">
    <location>
        <begin position="86"/>
        <end position="106"/>
    </location>
</feature>
<feature type="topological domain" description="Extracellular" evidence="2">
    <location>
        <begin position="107"/>
        <end position="203"/>
    </location>
</feature>
<feature type="transmembrane region" description="Helical" evidence="2">
    <location>
        <begin position="204"/>
        <end position="224"/>
    </location>
</feature>
<feature type="topological domain" description="Cytoplasmic" evidence="2">
    <location>
        <begin position="225"/>
        <end position="239"/>
    </location>
</feature>
<feature type="glycosylation site" description="N-linked (GlcNAc...) asparagine" evidence="2">
    <location>
        <position position="180"/>
    </location>
</feature>
<keyword id="KW-0325">Glycoprotein</keyword>
<keyword id="KW-0472">Membrane</keyword>
<keyword id="KW-1185">Reference proteome</keyword>
<keyword id="KW-0812">Transmembrane</keyword>
<keyword id="KW-1133">Transmembrane helix</keyword>
<name>TSN9_DANRE</name>
<accession>Q6GMK6</accession>